<dbReference type="EC" id="2.7.1.11" evidence="1"/>
<dbReference type="EMBL" id="X89039">
    <property type="protein sequence ID" value="CAA61438.2"/>
    <property type="molecule type" value="mRNA"/>
</dbReference>
<dbReference type="EMBL" id="X94340">
    <property type="protein sequence ID" value="CAA64065.1"/>
    <property type="molecule type" value="mRNA"/>
</dbReference>
<dbReference type="EMBL" id="AAFI02000012">
    <property type="protein sequence ID" value="EAL69948.1"/>
    <property type="molecule type" value="Genomic_DNA"/>
</dbReference>
<dbReference type="RefSeq" id="XP_644162.1">
    <property type="nucleotide sequence ID" value="XM_639070.1"/>
</dbReference>
<dbReference type="SMR" id="P90521"/>
<dbReference type="FunCoup" id="P90521">
    <property type="interactions" value="414"/>
</dbReference>
<dbReference type="STRING" id="44689.P90521"/>
<dbReference type="PaxDb" id="44689-DDB0191364"/>
<dbReference type="EnsemblProtists" id="EAL69948">
    <property type="protein sequence ID" value="EAL69948"/>
    <property type="gene ID" value="DDB_G0274111"/>
</dbReference>
<dbReference type="GeneID" id="8619591"/>
<dbReference type="KEGG" id="ddi:DDB_G0274111"/>
<dbReference type="dictyBase" id="DDB_G0274111">
    <property type="gene designation" value="pfkA"/>
</dbReference>
<dbReference type="VEuPathDB" id="AmoebaDB:DDB_G0274111"/>
<dbReference type="eggNOG" id="KOG2440">
    <property type="taxonomic scope" value="Eukaryota"/>
</dbReference>
<dbReference type="HOGENOM" id="CLU_011053_0_0_1"/>
<dbReference type="InParanoid" id="P90521"/>
<dbReference type="OMA" id="EWQDQMC"/>
<dbReference type="PhylomeDB" id="P90521"/>
<dbReference type="BRENDA" id="2.7.1.11">
    <property type="organism ID" value="1939"/>
</dbReference>
<dbReference type="SABIO-RK" id="P90521"/>
<dbReference type="UniPathway" id="UPA00109">
    <property type="reaction ID" value="UER00182"/>
</dbReference>
<dbReference type="PRO" id="PR:P90521"/>
<dbReference type="Proteomes" id="UP000002195">
    <property type="component" value="Chromosome 2"/>
</dbReference>
<dbReference type="GO" id="GO:0005945">
    <property type="term" value="C:6-phosphofructokinase complex"/>
    <property type="evidence" value="ECO:0000314"/>
    <property type="project" value="dictyBase"/>
</dbReference>
<dbReference type="GO" id="GO:0005829">
    <property type="term" value="C:cytosol"/>
    <property type="evidence" value="ECO:0000314"/>
    <property type="project" value="dictyBase"/>
</dbReference>
<dbReference type="GO" id="GO:0003872">
    <property type="term" value="F:6-phosphofructokinase activity"/>
    <property type="evidence" value="ECO:0000314"/>
    <property type="project" value="dictyBase"/>
</dbReference>
<dbReference type="GO" id="GO:0005524">
    <property type="term" value="F:ATP binding"/>
    <property type="evidence" value="ECO:0007669"/>
    <property type="project" value="UniProtKB-KW"/>
</dbReference>
<dbReference type="GO" id="GO:0070095">
    <property type="term" value="F:fructose-6-phosphate binding"/>
    <property type="evidence" value="ECO:0000318"/>
    <property type="project" value="GO_Central"/>
</dbReference>
<dbReference type="GO" id="GO:0046872">
    <property type="term" value="F:metal ion binding"/>
    <property type="evidence" value="ECO:0007669"/>
    <property type="project" value="UniProtKB-KW"/>
</dbReference>
<dbReference type="GO" id="GO:0015631">
    <property type="term" value="F:tubulin binding"/>
    <property type="evidence" value="ECO:0000353"/>
    <property type="project" value="dictyBase"/>
</dbReference>
<dbReference type="GO" id="GO:0061621">
    <property type="term" value="P:canonical glycolysis"/>
    <property type="evidence" value="ECO:0000318"/>
    <property type="project" value="GO_Central"/>
</dbReference>
<dbReference type="GO" id="GO:0030388">
    <property type="term" value="P:fructose 1,6-bisphosphate metabolic process"/>
    <property type="evidence" value="ECO:0000318"/>
    <property type="project" value="GO_Central"/>
</dbReference>
<dbReference type="GO" id="GO:0006002">
    <property type="term" value="P:fructose 6-phosphate metabolic process"/>
    <property type="evidence" value="ECO:0000314"/>
    <property type="project" value="dictyBase"/>
</dbReference>
<dbReference type="GO" id="GO:0006007">
    <property type="term" value="P:glucose catabolic process"/>
    <property type="evidence" value="ECO:0000316"/>
    <property type="project" value="dictyBase"/>
</dbReference>
<dbReference type="GO" id="GO:0031115">
    <property type="term" value="P:negative regulation of microtubule polymerization"/>
    <property type="evidence" value="ECO:0000314"/>
    <property type="project" value="dictyBase"/>
</dbReference>
<dbReference type="FunFam" id="3.40.50.460:FF:000002">
    <property type="entry name" value="ATP-dependent 6-phosphofructokinase"/>
    <property type="match status" value="1"/>
</dbReference>
<dbReference type="FunFam" id="3.40.50.460:FF:000008">
    <property type="entry name" value="ATP-dependent 6-phosphofructokinase"/>
    <property type="match status" value="1"/>
</dbReference>
<dbReference type="Gene3D" id="3.40.50.450">
    <property type="match status" value="2"/>
</dbReference>
<dbReference type="Gene3D" id="3.40.50.460">
    <property type="entry name" value="Phosphofructokinase domain"/>
    <property type="match status" value="2"/>
</dbReference>
<dbReference type="HAMAP" id="MF_03184">
    <property type="entry name" value="Phosphofructokinase_I_E"/>
    <property type="match status" value="1"/>
</dbReference>
<dbReference type="InterPro" id="IPR009161">
    <property type="entry name" value="6-Pfructokinase_euk"/>
</dbReference>
<dbReference type="InterPro" id="IPR022953">
    <property type="entry name" value="ATP_PFK"/>
</dbReference>
<dbReference type="InterPro" id="IPR015912">
    <property type="entry name" value="Phosphofructokinase_CS"/>
</dbReference>
<dbReference type="InterPro" id="IPR000023">
    <property type="entry name" value="Phosphofructokinase_dom"/>
</dbReference>
<dbReference type="InterPro" id="IPR035966">
    <property type="entry name" value="PKF_sf"/>
</dbReference>
<dbReference type="NCBIfam" id="TIGR02478">
    <property type="entry name" value="6PF1K_euk"/>
    <property type="match status" value="1"/>
</dbReference>
<dbReference type="PANTHER" id="PTHR13697:SF4">
    <property type="entry name" value="ATP-DEPENDENT 6-PHOSPHOFRUCTOKINASE"/>
    <property type="match status" value="1"/>
</dbReference>
<dbReference type="PANTHER" id="PTHR13697">
    <property type="entry name" value="PHOSPHOFRUCTOKINASE"/>
    <property type="match status" value="1"/>
</dbReference>
<dbReference type="Pfam" id="PF00365">
    <property type="entry name" value="PFK"/>
    <property type="match status" value="2"/>
</dbReference>
<dbReference type="PIRSF" id="PIRSF000533">
    <property type="entry name" value="ATP_PFK_euk"/>
    <property type="match status" value="1"/>
</dbReference>
<dbReference type="PRINTS" id="PR00476">
    <property type="entry name" value="PHFRCTKINASE"/>
</dbReference>
<dbReference type="SUPFAM" id="SSF53784">
    <property type="entry name" value="Phosphofructokinase"/>
    <property type="match status" value="2"/>
</dbReference>
<dbReference type="PROSITE" id="PS00433">
    <property type="entry name" value="PHOSPHOFRUCTOKINASE"/>
    <property type="match status" value="2"/>
</dbReference>
<reference key="1">
    <citation type="journal article" date="1997" name="Eur. J. Biochem.">
        <title>Cloning, sequencing and developmental expression of phosphofructokinase from Dictyostelium discoideum.</title>
        <authorList>
            <person name="Estevez A.M."/>
            <person name="Martinez-Costa O.H."/>
            <person name="Sanchez V."/>
            <person name="Aragon J.J."/>
        </authorList>
    </citation>
    <scope>NUCLEOTIDE SEQUENCE [MRNA]</scope>
    <source>
        <strain>AX3</strain>
    </source>
</reference>
<reference key="2">
    <citation type="journal article" date="2002" name="Nature">
        <title>Sequence and analysis of chromosome 2 of Dictyostelium discoideum.</title>
        <authorList>
            <person name="Gloeckner G."/>
            <person name="Eichinger L."/>
            <person name="Szafranski K."/>
            <person name="Pachebat J.A."/>
            <person name="Bankier A.T."/>
            <person name="Dear P.H."/>
            <person name="Lehmann R."/>
            <person name="Baumgart C."/>
            <person name="Parra G."/>
            <person name="Abril J.F."/>
            <person name="Guigo R."/>
            <person name="Kumpf K."/>
            <person name="Tunggal B."/>
            <person name="Cox E.C."/>
            <person name="Quail M.A."/>
            <person name="Platzer M."/>
            <person name="Rosenthal A."/>
            <person name="Noegel A.A."/>
        </authorList>
    </citation>
    <scope>NUCLEOTIDE SEQUENCE [LARGE SCALE GENOMIC DNA]</scope>
    <source>
        <strain>AX4</strain>
    </source>
</reference>
<reference key="3">
    <citation type="journal article" date="2005" name="Nature">
        <title>The genome of the social amoeba Dictyostelium discoideum.</title>
        <authorList>
            <person name="Eichinger L."/>
            <person name="Pachebat J.A."/>
            <person name="Gloeckner G."/>
            <person name="Rajandream M.A."/>
            <person name="Sucgang R."/>
            <person name="Berriman M."/>
            <person name="Song J."/>
            <person name="Olsen R."/>
            <person name="Szafranski K."/>
            <person name="Xu Q."/>
            <person name="Tunggal B."/>
            <person name="Kummerfeld S."/>
            <person name="Madera M."/>
            <person name="Konfortov B.A."/>
            <person name="Rivero F."/>
            <person name="Bankier A.T."/>
            <person name="Lehmann R."/>
            <person name="Hamlin N."/>
            <person name="Davies R."/>
            <person name="Gaudet P."/>
            <person name="Fey P."/>
            <person name="Pilcher K."/>
            <person name="Chen G."/>
            <person name="Saunders D."/>
            <person name="Sodergren E.J."/>
            <person name="Davis P."/>
            <person name="Kerhornou A."/>
            <person name="Nie X."/>
            <person name="Hall N."/>
            <person name="Anjard C."/>
            <person name="Hemphill L."/>
            <person name="Bason N."/>
            <person name="Farbrother P."/>
            <person name="Desany B."/>
            <person name="Just E."/>
            <person name="Morio T."/>
            <person name="Rost R."/>
            <person name="Churcher C.M."/>
            <person name="Cooper J."/>
            <person name="Haydock S."/>
            <person name="van Driessche N."/>
            <person name="Cronin A."/>
            <person name="Goodhead I."/>
            <person name="Muzny D.M."/>
            <person name="Mourier T."/>
            <person name="Pain A."/>
            <person name="Lu M."/>
            <person name="Harper D."/>
            <person name="Lindsay R."/>
            <person name="Hauser H."/>
            <person name="James K.D."/>
            <person name="Quiles M."/>
            <person name="Madan Babu M."/>
            <person name="Saito T."/>
            <person name="Buchrieser C."/>
            <person name="Wardroper A."/>
            <person name="Felder M."/>
            <person name="Thangavelu M."/>
            <person name="Johnson D."/>
            <person name="Knights A."/>
            <person name="Loulseged H."/>
            <person name="Mungall K.L."/>
            <person name="Oliver K."/>
            <person name="Price C."/>
            <person name="Quail M.A."/>
            <person name="Urushihara H."/>
            <person name="Hernandez J."/>
            <person name="Rabbinowitsch E."/>
            <person name="Steffen D."/>
            <person name="Sanders M."/>
            <person name="Ma J."/>
            <person name="Kohara Y."/>
            <person name="Sharp S."/>
            <person name="Simmonds M.N."/>
            <person name="Spiegler S."/>
            <person name="Tivey A."/>
            <person name="Sugano S."/>
            <person name="White B."/>
            <person name="Walker D."/>
            <person name="Woodward J.R."/>
            <person name="Winckler T."/>
            <person name="Tanaka Y."/>
            <person name="Shaulsky G."/>
            <person name="Schleicher M."/>
            <person name="Weinstock G.M."/>
            <person name="Rosenthal A."/>
            <person name="Cox E.C."/>
            <person name="Chisholm R.L."/>
            <person name="Gibbs R.A."/>
            <person name="Loomis W.F."/>
            <person name="Platzer M."/>
            <person name="Kay R.R."/>
            <person name="Williams J.G."/>
            <person name="Dear P.H."/>
            <person name="Noegel A.A."/>
            <person name="Barrell B.G."/>
            <person name="Kuspa A."/>
        </authorList>
    </citation>
    <scope>NUCLEOTIDE SEQUENCE [LARGE SCALE GENOMIC DNA]</scope>
    <source>
        <strain>AX4</strain>
    </source>
</reference>
<reference key="4">
    <citation type="journal article" date="1994" name="Eur. J. Biochem.">
        <title>Purification and properties of phosphofructokinase from Dictyostelium discoideum.</title>
        <authorList>
            <person name="Martinez-Costa O.H."/>
            <person name="Estevez A.M."/>
            <person name="Sanchez V."/>
            <person name="Aragon J.J."/>
        </authorList>
    </citation>
    <scope>FUNCTION</scope>
    <scope>CATALYTIC ACTIVITY</scope>
    <scope>BIOPHYSICOCHEMICAL PROPERTIES</scope>
    <scope>SUBUNIT</scope>
    <scope>COFACTOR</scope>
</reference>
<reference key="5">
    <citation type="journal article" date="2012" name="Biochem. J.">
        <title>Distinct functional roles of the two terminal halves of eukaryotic phosphofructokinase.</title>
        <authorList>
            <person name="Martinez-Costa O.H."/>
            <person name="Sanchez V."/>
            <person name="Lazaro A."/>
            <person name="Hernandez E.D."/>
            <person name="Tornheim K."/>
            <person name="Aragon J.J."/>
        </authorList>
    </citation>
    <scope>FUNCTION</scope>
</reference>
<gene>
    <name type="primary">pfkA</name>
    <name type="synonym">pfk</name>
    <name type="ORF">DDB_G0274111</name>
</gene>
<organism>
    <name type="scientific">Dictyostelium discoideum</name>
    <name type="common">Social amoeba</name>
    <dbReference type="NCBI Taxonomy" id="44689"/>
    <lineage>
        <taxon>Eukaryota</taxon>
        <taxon>Amoebozoa</taxon>
        <taxon>Evosea</taxon>
        <taxon>Eumycetozoa</taxon>
        <taxon>Dictyostelia</taxon>
        <taxon>Dictyosteliales</taxon>
        <taxon>Dictyosteliaceae</taxon>
        <taxon>Dictyostelium</taxon>
    </lineage>
</organism>
<sequence>MTTTSKIINDGEGEDVKGNKNINKKSLIDENRLDEKKDLLSDKVESKTHCSVKRMAVLTSGGDSSGMNPAIRAFARQVMLKGAKVFAVREGYNGLVNDSIVPLNWGSVAGIISRGGTIIGTARSAEFRTREGRKRAVFNLVKNRIDNLLVIGGDGSLTGANLLRTEWCSLLEELVKDGKLTLDVMEHFPILSIAGIVGSIDNDMCGTDLTVGADTATKRILEAIDSILSTAVSHQRSFVIEVMGRNCGWLALASGVATGADYILIPESPPDDGWEQTMADNLERGRLSGRRCSLVIVSEGAIDRQGKPITSAYVRQFLEDKGHDARITILGHVQRGGTPTFLDRYIATRMGIEAANYFYDSTIEQLKQPVLIGMSGMDTIRSPLMECVQKTQSIASLIKERRFNEVVDVRGGMFKEFYEIFIACSNLHRRKVESKGMGVLILHSGGPSPGMNPCVRAFTRLGIDHGYTMYGCFNGFGGLALGEIEQLHWMTVNGWSVMGGAELGTNRSIPNDSNIEAIIATLERFKINAILMFGGFNGYLGIAKLYEYREKYQQLKRISIIGAPGTIANNVPGTNISIGSDTSLNNTLDALDKIKQSAVASRRLFVVEVMGAHCGYLAAMSSLTSGAERSYIMERGITLNTLTKDLEMFVERFKREHRIGLIIKSELASNTYSTHFIYSLFKEEGKHLFDVRESILGHLQQGGTPSAIDRIFSTRLMNHYYQFLENDLKEHGHLQMNGCIGFIDGGIHYTPMQEMIEEMSDKFRRPRSQWWMDLVETSQNISVFPLDDPSSTNFEGCNSNLSEQDRPIKKSDISSPTSYSQKTFDPNVNPQFTL</sequence>
<proteinExistence type="evidence at protein level"/>
<keyword id="KW-0021">Allosteric enzyme</keyword>
<keyword id="KW-0067">ATP-binding</keyword>
<keyword id="KW-0963">Cytoplasm</keyword>
<keyword id="KW-0324">Glycolysis</keyword>
<keyword id="KW-0418">Kinase</keyword>
<keyword id="KW-0460">Magnesium</keyword>
<keyword id="KW-0479">Metal-binding</keyword>
<keyword id="KW-0547">Nucleotide-binding</keyword>
<keyword id="KW-1185">Reference proteome</keyword>
<keyword id="KW-0808">Transferase</keyword>
<comment type="function">
    <text evidence="1 3 4">Catalyzes the phosphorylation of D-fructose 6-phosphate to fructose 1,6-bisphosphate by ATP, the first committing step of glycolysis.</text>
</comment>
<comment type="catalytic activity">
    <reaction evidence="1 4">
        <text>beta-D-fructose 6-phosphate + ATP = beta-D-fructose 1,6-bisphosphate + ADP + H(+)</text>
        <dbReference type="Rhea" id="RHEA:16109"/>
        <dbReference type="ChEBI" id="CHEBI:15378"/>
        <dbReference type="ChEBI" id="CHEBI:30616"/>
        <dbReference type="ChEBI" id="CHEBI:32966"/>
        <dbReference type="ChEBI" id="CHEBI:57634"/>
        <dbReference type="ChEBI" id="CHEBI:456216"/>
        <dbReference type="EC" id="2.7.1.11"/>
    </reaction>
</comment>
<comment type="cofactor">
    <cofactor evidence="1 4">
        <name>Mg(2+)</name>
        <dbReference type="ChEBI" id="CHEBI:18420"/>
    </cofactor>
</comment>
<comment type="activity regulation">
    <text evidence="1">Allosterically activated by ADP, AMP, or fructose 2,6-bisphosphate, and allosterically inhibited by ATP or citrate.</text>
</comment>
<comment type="biophysicochemical properties">
    <kinetics>
        <KM evidence="4">16 uM for ATP</KM>
        <KM evidence="4">22 uM for fructose 6-phosphate</KM>
        <Vmax evidence="4">89.0 umol/min/mg enzyme</Vmax>
    </kinetics>
    <phDependence>
        <text evidence="4">Optimum pH is 7.6.</text>
    </phDependence>
</comment>
<comment type="pathway">
    <text evidence="1">Carbohydrate degradation; glycolysis; D-glyceraldehyde 3-phosphate and glycerone phosphate from D-glucose: step 3/4.</text>
</comment>
<comment type="subunit">
    <text evidence="1 4">Homotetramer.</text>
</comment>
<comment type="subcellular location">
    <subcellularLocation>
        <location evidence="1">Cytoplasm</location>
    </subcellularLocation>
</comment>
<comment type="PTM">
    <text>The N-terminus is blocked.</text>
</comment>
<comment type="similarity">
    <text evidence="1">Belongs to the phosphofructokinase type A (PFKA) family. ATP-dependent PFK group I subfamily. Eukaryotic two domain clade 'E' sub-subfamily.</text>
</comment>
<protein>
    <recommendedName>
        <fullName evidence="1">ATP-dependent 6-phosphofructokinase</fullName>
        <shortName evidence="1">ATP-PFK</shortName>
        <shortName evidence="1">Phosphofructokinase</shortName>
        <ecNumber evidence="1">2.7.1.11</ecNumber>
    </recommendedName>
    <alternativeName>
        <fullName evidence="1">Phosphohexokinase</fullName>
    </alternativeName>
</protein>
<feature type="chain" id="PRO_0000112030" description="ATP-dependent 6-phosphofructokinase">
    <location>
        <begin position="1"/>
        <end position="834"/>
    </location>
</feature>
<feature type="region of interest" description="N-terminal catalytic PFK domain 1">
    <location>
        <begin position="1"/>
        <end position="426"/>
    </location>
</feature>
<feature type="region of interest" description="Interdomain linker">
    <location>
        <begin position="427"/>
        <end position="437"/>
    </location>
</feature>
<feature type="region of interest" description="C-terminal regulatory PFK domain 2">
    <location>
        <begin position="438"/>
        <end position="834"/>
    </location>
</feature>
<feature type="region of interest" description="Disordered" evidence="2">
    <location>
        <begin position="799"/>
        <end position="834"/>
    </location>
</feature>
<feature type="compositionally biased region" description="Basic and acidic residues" evidence="2">
    <location>
        <begin position="803"/>
        <end position="812"/>
    </location>
</feature>
<feature type="compositionally biased region" description="Polar residues" evidence="2">
    <location>
        <begin position="813"/>
        <end position="834"/>
    </location>
</feature>
<feature type="active site" description="Proton acceptor" evidence="1">
    <location>
        <position position="201"/>
    </location>
</feature>
<feature type="binding site" evidence="1">
    <location>
        <position position="62"/>
    </location>
    <ligand>
        <name>ATP</name>
        <dbReference type="ChEBI" id="CHEBI:30616"/>
    </ligand>
</feature>
<feature type="binding site" evidence="1">
    <location>
        <begin position="123"/>
        <end position="124"/>
    </location>
    <ligand>
        <name>ATP</name>
        <dbReference type="ChEBI" id="CHEBI:30616"/>
    </ligand>
</feature>
<feature type="binding site" evidence="1">
    <location>
        <begin position="153"/>
        <end position="156"/>
    </location>
    <ligand>
        <name>ATP</name>
        <dbReference type="ChEBI" id="CHEBI:30616"/>
    </ligand>
</feature>
<feature type="binding site" evidence="1">
    <location>
        <position position="154"/>
    </location>
    <ligand>
        <name>Mg(2+)</name>
        <dbReference type="ChEBI" id="CHEBI:18420"/>
        <note>catalytic</note>
    </ligand>
</feature>
<feature type="binding site" description="in other chain" evidence="1">
    <location>
        <begin position="199"/>
        <end position="201"/>
    </location>
    <ligand>
        <name>substrate</name>
        <note>ligand shared between dimeric partners</note>
    </ligand>
</feature>
<feature type="binding site" evidence="1">
    <location>
        <position position="236"/>
    </location>
    <ligand>
        <name>substrate</name>
        <note>ligand shared between dimeric partners</note>
    </ligand>
</feature>
<feature type="binding site" description="in other chain" evidence="1">
    <location>
        <begin position="243"/>
        <end position="245"/>
    </location>
    <ligand>
        <name>substrate</name>
        <note>ligand shared between dimeric partners</note>
    </ligand>
</feature>
<feature type="binding site" description="in other chain" evidence="1">
    <location>
        <position position="299"/>
    </location>
    <ligand>
        <name>substrate</name>
        <note>ligand shared between dimeric partners</note>
    </ligand>
</feature>
<feature type="binding site" evidence="1">
    <location>
        <position position="326"/>
    </location>
    <ligand>
        <name>substrate</name>
        <note>ligand shared between dimeric partners</note>
    </ligand>
</feature>
<feature type="binding site" description="in other chain" evidence="1">
    <location>
        <begin position="332"/>
        <end position="335"/>
    </location>
    <ligand>
        <name>substrate</name>
        <note>ligand shared between dimeric partners</note>
    </ligand>
</feature>
<feature type="binding site" description="in other chain" evidence="1">
    <location>
        <position position="507"/>
    </location>
    <ligand>
        <name>beta-D-fructose 2,6-bisphosphate</name>
        <dbReference type="ChEBI" id="CHEBI:58579"/>
        <note>allosteric activator; ligand shared between dimeric partners</note>
    </ligand>
</feature>
<feature type="binding site" description="in other chain" evidence="1">
    <location>
        <begin position="566"/>
        <end position="570"/>
    </location>
    <ligand>
        <name>beta-D-fructose 2,6-bisphosphate</name>
        <dbReference type="ChEBI" id="CHEBI:58579"/>
        <note>allosteric activator; ligand shared between dimeric partners</note>
    </ligand>
</feature>
<feature type="binding site" evidence="1">
    <location>
        <position position="603"/>
    </location>
    <ligand>
        <name>beta-D-fructose 2,6-bisphosphate</name>
        <dbReference type="ChEBI" id="CHEBI:58579"/>
        <note>allosteric activator; ligand shared between dimeric partners</note>
    </ligand>
</feature>
<feature type="binding site" description="in other chain" evidence="1">
    <location>
        <begin position="610"/>
        <end position="612"/>
    </location>
    <ligand>
        <name>beta-D-fructose 2,6-bisphosphate</name>
        <dbReference type="ChEBI" id="CHEBI:58579"/>
        <note>allosteric activator; ligand shared between dimeric partners</note>
    </ligand>
</feature>
<feature type="binding site" description="in other chain" evidence="1">
    <location>
        <position position="666"/>
    </location>
    <ligand>
        <name>beta-D-fructose 2,6-bisphosphate</name>
        <dbReference type="ChEBI" id="CHEBI:58579"/>
        <note>allosteric activator; ligand shared between dimeric partners</note>
    </ligand>
</feature>
<feature type="binding site" evidence="1">
    <location>
        <position position="692"/>
    </location>
    <ligand>
        <name>beta-D-fructose 2,6-bisphosphate</name>
        <dbReference type="ChEBI" id="CHEBI:58579"/>
        <note>allosteric activator; ligand shared between dimeric partners</note>
    </ligand>
</feature>
<feature type="binding site" description="in other chain" evidence="1">
    <location>
        <begin position="698"/>
        <end position="701"/>
    </location>
    <ligand>
        <name>beta-D-fructose 2,6-bisphosphate</name>
        <dbReference type="ChEBI" id="CHEBI:58579"/>
        <note>allosteric activator; ligand shared between dimeric partners</note>
    </ligand>
</feature>
<feature type="binding site" description="in other chain" evidence="1">
    <location>
        <position position="764"/>
    </location>
    <ligand>
        <name>beta-D-fructose 2,6-bisphosphate</name>
        <dbReference type="ChEBI" id="CHEBI:58579"/>
        <note>allosteric activator; ligand shared between dimeric partners</note>
    </ligand>
</feature>
<feature type="sequence conflict" description="In Ref. 1; CAA61438/CAA64065." evidence="5" ref="1">
    <original>GII</original>
    <variation>WLY</variation>
    <location>
        <begin position="110"/>
        <end position="112"/>
    </location>
</feature>
<feature type="sequence conflict" description="In Ref. 1; CAA64065." evidence="5" ref="1">
    <original>ID</original>
    <variation>MH</variation>
    <location>
        <begin position="302"/>
        <end position="303"/>
    </location>
</feature>
<evidence type="ECO:0000255" key="1">
    <source>
        <dbReference type="HAMAP-Rule" id="MF_03184"/>
    </source>
</evidence>
<evidence type="ECO:0000256" key="2">
    <source>
        <dbReference type="SAM" id="MobiDB-lite"/>
    </source>
</evidence>
<evidence type="ECO:0000269" key="3">
    <source>
    </source>
</evidence>
<evidence type="ECO:0000269" key="4">
    <source>
    </source>
</evidence>
<evidence type="ECO:0000305" key="5"/>
<name>PFKA_DICDI</name>
<accession>P90521</accession>
<accession>Q555B1</accession>
<accession>Q86HR6</accession>
<accession>Q95023</accession>